<comment type="function">
    <text evidence="1">This protein is one of the two subunits of integration host factor, a specific DNA-binding protein that functions in genetic recombination as well as in transcriptional and translational control.</text>
</comment>
<comment type="subunit">
    <text evidence="1">Heterodimer of an alpha and a beta chain.</text>
</comment>
<comment type="similarity">
    <text evidence="1">Belongs to the bacterial histone-like protein family.</text>
</comment>
<proteinExistence type="inferred from homology"/>
<organism>
    <name type="scientific">Xanthomonas campestris pv. campestris (strain B100)</name>
    <dbReference type="NCBI Taxonomy" id="509169"/>
    <lineage>
        <taxon>Bacteria</taxon>
        <taxon>Pseudomonadati</taxon>
        <taxon>Pseudomonadota</taxon>
        <taxon>Gammaproteobacteria</taxon>
        <taxon>Lysobacterales</taxon>
        <taxon>Lysobacteraceae</taxon>
        <taxon>Xanthomonas</taxon>
    </lineage>
</organism>
<dbReference type="EMBL" id="AM920689">
    <property type="protein sequence ID" value="CAP51060.1"/>
    <property type="molecule type" value="Genomic_DNA"/>
</dbReference>
<dbReference type="SMR" id="B0RRH5"/>
<dbReference type="KEGG" id="xca:xcc-b100_1710"/>
<dbReference type="HOGENOM" id="CLU_105066_1_3_6"/>
<dbReference type="Proteomes" id="UP000001188">
    <property type="component" value="Chromosome"/>
</dbReference>
<dbReference type="GO" id="GO:0005829">
    <property type="term" value="C:cytosol"/>
    <property type="evidence" value="ECO:0007669"/>
    <property type="project" value="TreeGrafter"/>
</dbReference>
<dbReference type="GO" id="GO:0003677">
    <property type="term" value="F:DNA binding"/>
    <property type="evidence" value="ECO:0007669"/>
    <property type="project" value="UniProtKB-UniRule"/>
</dbReference>
<dbReference type="GO" id="GO:0030527">
    <property type="term" value="F:structural constituent of chromatin"/>
    <property type="evidence" value="ECO:0007669"/>
    <property type="project" value="InterPro"/>
</dbReference>
<dbReference type="GO" id="GO:0006310">
    <property type="term" value="P:DNA recombination"/>
    <property type="evidence" value="ECO:0007669"/>
    <property type="project" value="UniProtKB-UniRule"/>
</dbReference>
<dbReference type="GO" id="GO:0009893">
    <property type="term" value="P:positive regulation of metabolic process"/>
    <property type="evidence" value="ECO:0007669"/>
    <property type="project" value="UniProtKB-ARBA"/>
</dbReference>
<dbReference type="GO" id="GO:0006355">
    <property type="term" value="P:regulation of DNA-templated transcription"/>
    <property type="evidence" value="ECO:0007669"/>
    <property type="project" value="UniProtKB-UniRule"/>
</dbReference>
<dbReference type="GO" id="GO:0006417">
    <property type="term" value="P:regulation of translation"/>
    <property type="evidence" value="ECO:0007669"/>
    <property type="project" value="UniProtKB-UniRule"/>
</dbReference>
<dbReference type="CDD" id="cd13835">
    <property type="entry name" value="IHF_A"/>
    <property type="match status" value="1"/>
</dbReference>
<dbReference type="FunFam" id="4.10.520.10:FF:000002">
    <property type="entry name" value="Integration host factor subunit alpha"/>
    <property type="match status" value="1"/>
</dbReference>
<dbReference type="Gene3D" id="4.10.520.10">
    <property type="entry name" value="IHF-like DNA-binding proteins"/>
    <property type="match status" value="1"/>
</dbReference>
<dbReference type="HAMAP" id="MF_00380">
    <property type="entry name" value="IHF_alpha"/>
    <property type="match status" value="1"/>
</dbReference>
<dbReference type="InterPro" id="IPR000119">
    <property type="entry name" value="Hist_DNA-bd"/>
</dbReference>
<dbReference type="InterPro" id="IPR020816">
    <property type="entry name" value="Histone-like_DNA-bd_CS"/>
</dbReference>
<dbReference type="InterPro" id="IPR010992">
    <property type="entry name" value="IHF-like_DNA-bd_dom_sf"/>
</dbReference>
<dbReference type="InterPro" id="IPR005684">
    <property type="entry name" value="IHF_alpha"/>
</dbReference>
<dbReference type="NCBIfam" id="TIGR00987">
    <property type="entry name" value="himA"/>
    <property type="match status" value="1"/>
</dbReference>
<dbReference type="NCBIfam" id="NF001401">
    <property type="entry name" value="PRK00285.1"/>
    <property type="match status" value="1"/>
</dbReference>
<dbReference type="PANTHER" id="PTHR33175">
    <property type="entry name" value="DNA-BINDING PROTEIN HU"/>
    <property type="match status" value="1"/>
</dbReference>
<dbReference type="PANTHER" id="PTHR33175:SF2">
    <property type="entry name" value="INTEGRATION HOST FACTOR SUBUNIT ALPHA"/>
    <property type="match status" value="1"/>
</dbReference>
<dbReference type="Pfam" id="PF00216">
    <property type="entry name" value="Bac_DNA_binding"/>
    <property type="match status" value="1"/>
</dbReference>
<dbReference type="PRINTS" id="PR01727">
    <property type="entry name" value="DNABINDINGHU"/>
</dbReference>
<dbReference type="SMART" id="SM00411">
    <property type="entry name" value="BHL"/>
    <property type="match status" value="1"/>
</dbReference>
<dbReference type="SUPFAM" id="SSF47729">
    <property type="entry name" value="IHF-like DNA-binding proteins"/>
    <property type="match status" value="1"/>
</dbReference>
<dbReference type="PROSITE" id="PS00045">
    <property type="entry name" value="HISTONE_LIKE"/>
    <property type="match status" value="1"/>
</dbReference>
<feature type="chain" id="PRO_1000122173" description="Integration host factor subunit alpha">
    <location>
        <begin position="1"/>
        <end position="99"/>
    </location>
</feature>
<evidence type="ECO:0000255" key="1">
    <source>
        <dbReference type="HAMAP-Rule" id="MF_00380"/>
    </source>
</evidence>
<protein>
    <recommendedName>
        <fullName evidence="1">Integration host factor subunit alpha</fullName>
        <shortName evidence="1">IHF-alpha</shortName>
    </recommendedName>
</protein>
<name>IHFA_XANCB</name>
<reference key="1">
    <citation type="journal article" date="2008" name="J. Biotechnol.">
        <title>The genome of Xanthomonas campestris pv. campestris B100 and its use for the reconstruction of metabolic pathways involved in xanthan biosynthesis.</title>
        <authorList>
            <person name="Vorhoelter F.-J."/>
            <person name="Schneiker S."/>
            <person name="Goesmann A."/>
            <person name="Krause L."/>
            <person name="Bekel T."/>
            <person name="Kaiser O."/>
            <person name="Linke B."/>
            <person name="Patschkowski T."/>
            <person name="Rueckert C."/>
            <person name="Schmid J."/>
            <person name="Sidhu V.K."/>
            <person name="Sieber V."/>
            <person name="Tauch A."/>
            <person name="Watt S.A."/>
            <person name="Weisshaar B."/>
            <person name="Becker A."/>
            <person name="Niehaus K."/>
            <person name="Puehler A."/>
        </authorList>
    </citation>
    <scope>NUCLEOTIDE SEQUENCE [LARGE SCALE GENOMIC DNA]</scope>
    <source>
        <strain>B100</strain>
    </source>
</reference>
<accession>B0RRH5</accession>
<gene>
    <name evidence="1" type="primary">ihfA</name>
    <name evidence="1" type="synonym">himA</name>
    <name type="ordered locus">xcc-b100_1710</name>
</gene>
<sequence length="99" mass="11214">MALTKAEMAERLFDEVGLNKREAKEFVDAFFDVLRDALEQGRQVKLSGFGNFDLRRKNQRPGRNPKTGEEIPISARTVVTFRPGQKLKERVEAYAGSGQ</sequence>
<keyword id="KW-0233">DNA recombination</keyword>
<keyword id="KW-0238">DNA-binding</keyword>
<keyword id="KW-0804">Transcription</keyword>
<keyword id="KW-0805">Transcription regulation</keyword>
<keyword id="KW-0810">Translation regulation</keyword>